<organism>
    <name type="scientific">Escherichia coli O127:H6 (strain E2348/69 / EPEC)</name>
    <dbReference type="NCBI Taxonomy" id="574521"/>
    <lineage>
        <taxon>Bacteria</taxon>
        <taxon>Pseudomonadati</taxon>
        <taxon>Pseudomonadota</taxon>
        <taxon>Gammaproteobacteria</taxon>
        <taxon>Enterobacterales</taxon>
        <taxon>Enterobacteriaceae</taxon>
        <taxon>Escherichia</taxon>
    </lineage>
</organism>
<sequence>MEMTNAQRLILSNQYKMMTMLDPANAERYRRLQTIIERGYGLQMRELDREFGELKEETCRTIIDIMEMYHALHVSWSNLHDQQSIDERRVTFLGFDAATEARYLGYVRFMVNVEGRYTHFDAGTHGFNAQTPMWEKYQRMLNVWHACPRQYHLSANEINQIINA</sequence>
<comment type="similarity">
    <text evidence="1">Belongs to the UPF0304 family.</text>
</comment>
<name>YFBU_ECO27</name>
<keyword id="KW-1185">Reference proteome</keyword>
<evidence type="ECO:0000255" key="1">
    <source>
        <dbReference type="HAMAP-Rule" id="MF_00762"/>
    </source>
</evidence>
<reference key="1">
    <citation type="journal article" date="2009" name="J. Bacteriol.">
        <title>Complete genome sequence and comparative genome analysis of enteropathogenic Escherichia coli O127:H6 strain E2348/69.</title>
        <authorList>
            <person name="Iguchi A."/>
            <person name="Thomson N.R."/>
            <person name="Ogura Y."/>
            <person name="Saunders D."/>
            <person name="Ooka T."/>
            <person name="Henderson I.R."/>
            <person name="Harris D."/>
            <person name="Asadulghani M."/>
            <person name="Kurokawa K."/>
            <person name="Dean P."/>
            <person name="Kenny B."/>
            <person name="Quail M.A."/>
            <person name="Thurston S."/>
            <person name="Dougan G."/>
            <person name="Hayashi T."/>
            <person name="Parkhill J."/>
            <person name="Frankel G."/>
        </authorList>
    </citation>
    <scope>NUCLEOTIDE SEQUENCE [LARGE SCALE GENOMIC DNA]</scope>
    <source>
        <strain>E2348/69 / EPEC</strain>
    </source>
</reference>
<proteinExistence type="inferred from homology"/>
<dbReference type="EMBL" id="FM180568">
    <property type="protein sequence ID" value="CAS09982.1"/>
    <property type="molecule type" value="Genomic_DNA"/>
</dbReference>
<dbReference type="RefSeq" id="WP_000426117.1">
    <property type="nucleotide sequence ID" value="NC_011601.1"/>
</dbReference>
<dbReference type="SMR" id="B7UFV2"/>
<dbReference type="KEGG" id="ecg:E2348C_2434"/>
<dbReference type="HOGENOM" id="CLU_101021_1_0_6"/>
<dbReference type="Proteomes" id="UP000008205">
    <property type="component" value="Chromosome"/>
</dbReference>
<dbReference type="FunFam" id="1.10.3190.10:FF:000001">
    <property type="entry name" value="UPF0304 protein YfbU"/>
    <property type="match status" value="1"/>
</dbReference>
<dbReference type="Gene3D" id="1.10.287.680">
    <property type="entry name" value="Helix hairpin bin"/>
    <property type="match status" value="1"/>
</dbReference>
<dbReference type="Gene3D" id="1.10.3190.10">
    <property type="entry name" value="yfbu gene product, domain 2"/>
    <property type="match status" value="1"/>
</dbReference>
<dbReference type="HAMAP" id="MF_00762">
    <property type="entry name" value="UPF0304"/>
    <property type="match status" value="1"/>
</dbReference>
<dbReference type="InterPro" id="IPR005587">
    <property type="entry name" value="UPF0304_YfbU"/>
</dbReference>
<dbReference type="InterPro" id="IPR023146">
    <property type="entry name" value="YfbU_alpha-helical_sf"/>
</dbReference>
<dbReference type="InterPro" id="IPR023145">
    <property type="entry name" value="YfbU_helix-hairpin_sf"/>
</dbReference>
<dbReference type="NCBIfam" id="NF003936">
    <property type="entry name" value="PRK05445.1"/>
    <property type="match status" value="1"/>
</dbReference>
<dbReference type="Pfam" id="PF03887">
    <property type="entry name" value="YfbU"/>
    <property type="match status" value="1"/>
</dbReference>
<dbReference type="PIRSF" id="PIRSF006272">
    <property type="entry name" value="UCP006272"/>
    <property type="match status" value="1"/>
</dbReference>
<dbReference type="SUPFAM" id="SSF116960">
    <property type="entry name" value="YfbU-like"/>
    <property type="match status" value="1"/>
</dbReference>
<accession>B7UFV2</accession>
<protein>
    <recommendedName>
        <fullName evidence="1">UPF0304 protein YfbU</fullName>
    </recommendedName>
</protein>
<gene>
    <name evidence="1" type="primary">yfbU</name>
    <name type="ordered locus">E2348C_2434</name>
</gene>
<feature type="chain" id="PRO_1000148417" description="UPF0304 protein YfbU">
    <location>
        <begin position="1"/>
        <end position="164"/>
    </location>
</feature>